<name>RS13_METPP</name>
<accession>A2SLD4</accession>
<evidence type="ECO:0000255" key="1">
    <source>
        <dbReference type="HAMAP-Rule" id="MF_01315"/>
    </source>
</evidence>
<evidence type="ECO:0000256" key="2">
    <source>
        <dbReference type="SAM" id="MobiDB-lite"/>
    </source>
</evidence>
<evidence type="ECO:0000305" key="3"/>
<dbReference type="EMBL" id="CP000555">
    <property type="protein sequence ID" value="ABM96373.1"/>
    <property type="molecule type" value="Genomic_DNA"/>
</dbReference>
<dbReference type="RefSeq" id="WP_011830994.1">
    <property type="nucleotide sequence ID" value="NC_008825.1"/>
</dbReference>
<dbReference type="SMR" id="A2SLD4"/>
<dbReference type="STRING" id="420662.Mpe_A3420"/>
<dbReference type="KEGG" id="mpt:Mpe_A3420"/>
<dbReference type="eggNOG" id="COG0099">
    <property type="taxonomic scope" value="Bacteria"/>
</dbReference>
<dbReference type="HOGENOM" id="CLU_103849_1_2_4"/>
<dbReference type="Proteomes" id="UP000000366">
    <property type="component" value="Chromosome"/>
</dbReference>
<dbReference type="GO" id="GO:0005829">
    <property type="term" value="C:cytosol"/>
    <property type="evidence" value="ECO:0007669"/>
    <property type="project" value="TreeGrafter"/>
</dbReference>
<dbReference type="GO" id="GO:0015935">
    <property type="term" value="C:small ribosomal subunit"/>
    <property type="evidence" value="ECO:0007669"/>
    <property type="project" value="TreeGrafter"/>
</dbReference>
<dbReference type="GO" id="GO:0019843">
    <property type="term" value="F:rRNA binding"/>
    <property type="evidence" value="ECO:0007669"/>
    <property type="project" value="UniProtKB-UniRule"/>
</dbReference>
<dbReference type="GO" id="GO:0003735">
    <property type="term" value="F:structural constituent of ribosome"/>
    <property type="evidence" value="ECO:0007669"/>
    <property type="project" value="InterPro"/>
</dbReference>
<dbReference type="GO" id="GO:0000049">
    <property type="term" value="F:tRNA binding"/>
    <property type="evidence" value="ECO:0007669"/>
    <property type="project" value="UniProtKB-UniRule"/>
</dbReference>
<dbReference type="GO" id="GO:0006412">
    <property type="term" value="P:translation"/>
    <property type="evidence" value="ECO:0007669"/>
    <property type="project" value="UniProtKB-UniRule"/>
</dbReference>
<dbReference type="FunFam" id="1.10.8.50:FF:000001">
    <property type="entry name" value="30S ribosomal protein S13"/>
    <property type="match status" value="1"/>
</dbReference>
<dbReference type="FunFam" id="4.10.910.10:FF:000001">
    <property type="entry name" value="30S ribosomal protein S13"/>
    <property type="match status" value="1"/>
</dbReference>
<dbReference type="Gene3D" id="1.10.8.50">
    <property type="match status" value="1"/>
</dbReference>
<dbReference type="Gene3D" id="4.10.910.10">
    <property type="entry name" value="30s ribosomal protein s13, domain 2"/>
    <property type="match status" value="1"/>
</dbReference>
<dbReference type="HAMAP" id="MF_01315">
    <property type="entry name" value="Ribosomal_uS13"/>
    <property type="match status" value="1"/>
</dbReference>
<dbReference type="InterPro" id="IPR027437">
    <property type="entry name" value="Rbsml_uS13_C"/>
</dbReference>
<dbReference type="InterPro" id="IPR001892">
    <property type="entry name" value="Ribosomal_uS13"/>
</dbReference>
<dbReference type="InterPro" id="IPR010979">
    <property type="entry name" value="Ribosomal_uS13-like_H2TH"/>
</dbReference>
<dbReference type="InterPro" id="IPR019980">
    <property type="entry name" value="Ribosomal_uS13_bac-type"/>
</dbReference>
<dbReference type="InterPro" id="IPR018269">
    <property type="entry name" value="Ribosomal_uS13_CS"/>
</dbReference>
<dbReference type="NCBIfam" id="TIGR03631">
    <property type="entry name" value="uS13_bact"/>
    <property type="match status" value="1"/>
</dbReference>
<dbReference type="PANTHER" id="PTHR10871">
    <property type="entry name" value="30S RIBOSOMAL PROTEIN S13/40S RIBOSOMAL PROTEIN S18"/>
    <property type="match status" value="1"/>
</dbReference>
<dbReference type="PANTHER" id="PTHR10871:SF1">
    <property type="entry name" value="SMALL RIBOSOMAL SUBUNIT PROTEIN US13M"/>
    <property type="match status" value="1"/>
</dbReference>
<dbReference type="Pfam" id="PF00416">
    <property type="entry name" value="Ribosomal_S13"/>
    <property type="match status" value="1"/>
</dbReference>
<dbReference type="PIRSF" id="PIRSF002134">
    <property type="entry name" value="Ribosomal_S13"/>
    <property type="match status" value="1"/>
</dbReference>
<dbReference type="SUPFAM" id="SSF46946">
    <property type="entry name" value="S13-like H2TH domain"/>
    <property type="match status" value="1"/>
</dbReference>
<dbReference type="PROSITE" id="PS00646">
    <property type="entry name" value="RIBOSOMAL_S13_1"/>
    <property type="match status" value="1"/>
</dbReference>
<dbReference type="PROSITE" id="PS50159">
    <property type="entry name" value="RIBOSOMAL_S13_2"/>
    <property type="match status" value="1"/>
</dbReference>
<protein>
    <recommendedName>
        <fullName evidence="1">Small ribosomal subunit protein uS13</fullName>
    </recommendedName>
    <alternativeName>
        <fullName evidence="3">30S ribosomal protein S13</fullName>
    </alternativeName>
</protein>
<feature type="chain" id="PRO_0000306643" description="Small ribosomal subunit protein uS13">
    <location>
        <begin position="1"/>
        <end position="121"/>
    </location>
</feature>
<feature type="region of interest" description="Disordered" evidence="2">
    <location>
        <begin position="93"/>
        <end position="121"/>
    </location>
</feature>
<comment type="function">
    <text evidence="1">Located at the top of the head of the 30S subunit, it contacts several helices of the 16S rRNA. In the 70S ribosome it contacts the 23S rRNA (bridge B1a) and protein L5 of the 50S subunit (bridge B1b), connecting the 2 subunits; these bridges are implicated in subunit movement. Contacts the tRNAs in the A and P-sites.</text>
</comment>
<comment type="subunit">
    <text evidence="1">Part of the 30S ribosomal subunit. Forms a loose heterodimer with protein S19. Forms two bridges to the 50S subunit in the 70S ribosome.</text>
</comment>
<comment type="similarity">
    <text evidence="1">Belongs to the universal ribosomal protein uS13 family.</text>
</comment>
<sequence length="121" mass="13630">MARIAGINIPPQKHAEIGLTAIYGIGRTTAQKICDSCGIARDKKIKDLTDGDLEKIREEVGRMTIEGDLRRETTINIKRLMDLGCYRGFRHRRGLPMRGQRTRTNARTRKGPRKSAAALKK</sequence>
<gene>
    <name evidence="1" type="primary">rpsM</name>
    <name type="ordered locus">Mpe_A3420</name>
</gene>
<proteinExistence type="inferred from homology"/>
<keyword id="KW-1185">Reference proteome</keyword>
<keyword id="KW-0687">Ribonucleoprotein</keyword>
<keyword id="KW-0689">Ribosomal protein</keyword>
<keyword id="KW-0694">RNA-binding</keyword>
<keyword id="KW-0699">rRNA-binding</keyword>
<keyword id="KW-0820">tRNA-binding</keyword>
<reference key="1">
    <citation type="journal article" date="2007" name="J. Bacteriol.">
        <title>Whole-genome analysis of the methyl tert-butyl ether-degrading beta-proteobacterium Methylibium petroleiphilum PM1.</title>
        <authorList>
            <person name="Kane S.R."/>
            <person name="Chakicherla A.Y."/>
            <person name="Chain P.S.G."/>
            <person name="Schmidt R."/>
            <person name="Shin M.W."/>
            <person name="Legler T.C."/>
            <person name="Scow K.M."/>
            <person name="Larimer F.W."/>
            <person name="Lucas S.M."/>
            <person name="Richardson P.M."/>
            <person name="Hristova K.R."/>
        </authorList>
    </citation>
    <scope>NUCLEOTIDE SEQUENCE [LARGE SCALE GENOMIC DNA]</scope>
    <source>
        <strain>ATCC BAA-1232 / LMG 22953 / PM1</strain>
    </source>
</reference>
<organism>
    <name type="scientific">Methylibium petroleiphilum (strain ATCC BAA-1232 / LMG 22953 / PM1)</name>
    <dbReference type="NCBI Taxonomy" id="420662"/>
    <lineage>
        <taxon>Bacteria</taxon>
        <taxon>Pseudomonadati</taxon>
        <taxon>Pseudomonadota</taxon>
        <taxon>Betaproteobacteria</taxon>
        <taxon>Burkholderiales</taxon>
        <taxon>Sphaerotilaceae</taxon>
        <taxon>Methylibium</taxon>
    </lineage>
</organism>